<feature type="transit peptide" description="Mitochondrion" evidence="4">
    <location>
        <begin position="1"/>
        <end position="41"/>
    </location>
</feature>
<feature type="chain" id="PRO_0000010340" description="Succinate dehydrogenase [ubiquinone] flavoprotein subunit, mitochondrial">
    <location>
        <begin position="42"/>
        <end position="661"/>
    </location>
</feature>
<feature type="active site" description="Proton acceptor" evidence="3">
    <location>
        <position position="337"/>
    </location>
</feature>
<feature type="binding site" evidence="3">
    <location>
        <begin position="65"/>
        <end position="70"/>
    </location>
    <ligand>
        <name>FAD</name>
        <dbReference type="ChEBI" id="CHEBI:57692"/>
    </ligand>
</feature>
<feature type="binding site" evidence="3">
    <location>
        <begin position="88"/>
        <end position="103"/>
    </location>
    <ligand>
        <name>FAD</name>
        <dbReference type="ChEBI" id="CHEBI:57692"/>
    </ligand>
</feature>
<feature type="binding site" evidence="3">
    <location>
        <position position="272"/>
    </location>
    <ligand>
        <name>FAD</name>
        <dbReference type="ChEBI" id="CHEBI:57692"/>
    </ligand>
</feature>
<feature type="binding site" evidence="3">
    <location>
        <position position="293"/>
    </location>
    <ligand>
        <name>substrate</name>
    </ligand>
</feature>
<feature type="binding site" evidence="3">
    <location>
        <position position="305"/>
    </location>
    <ligand>
        <name>substrate</name>
    </ligand>
</feature>
<feature type="binding site" evidence="3">
    <location>
        <position position="404"/>
    </location>
    <ligand>
        <name>substrate</name>
    </ligand>
</feature>
<feature type="binding site" evidence="3">
    <location>
        <position position="438"/>
    </location>
    <ligand>
        <name>FAD</name>
        <dbReference type="ChEBI" id="CHEBI:57692"/>
    </ligand>
</feature>
<feature type="binding site" evidence="3">
    <location>
        <position position="449"/>
    </location>
    <ligand>
        <name>substrate</name>
    </ligand>
</feature>
<feature type="binding site" evidence="3">
    <location>
        <begin position="454"/>
        <end position="455"/>
    </location>
    <ligand>
        <name>FAD</name>
        <dbReference type="ChEBI" id="CHEBI:57692"/>
    </ligand>
</feature>
<feature type="modified residue" description="Tele-8alpha-FAD histidine" evidence="3">
    <location>
        <position position="96"/>
    </location>
</feature>
<feature type="sequence conflict" description="In Ref. 5; CAA70285." evidence="6" ref="5">
    <original>S</original>
    <variation>N</variation>
    <location>
        <position position="207"/>
    </location>
</feature>
<feature type="sequence conflict" description="In Ref. 5; CAA70285." evidence="6" ref="5">
    <original>I</original>
    <variation>L</variation>
    <location>
        <position position="251"/>
    </location>
</feature>
<feature type="sequence conflict" description="In Ref. 5; CAA70285." evidence="6" ref="5">
    <original>Q</original>
    <variation>L</variation>
    <location>
        <position position="503"/>
    </location>
</feature>
<feature type="sequence conflict" description="In Ref. 5; CAA70285." evidence="6" ref="5">
    <original>H</original>
    <variation>L</variation>
    <location>
        <position position="520"/>
    </location>
</feature>
<sequence>MSGIMRVPSILAKNAVASMQRAAAVGVQRSYHITHGRQQASAANPDKISKQYPVVDHAYDAIVVGAGGAGLRAAFGLVAEGFRTAVITKLFPTRSHTIAAQGGINAALGNMEEDDWKWHMYDTVKGSDWLGDQDAIHYMTREAPKAVIELENYGMPFSRTQDGKIYQRAFGGQSLKFGKGGQAHRCCAVADRTGHSLLHTLYGQSLSYDCNYFVEYFALDLIFEDGECRGVLALNLEDGTLHRFRAKNTVIATGGYGRAFFSCTSAHTCTGDGTAMVARQGLPSQDLEFVQFHPTGIYGAGCLITEGCRGEGGYLINGNGERFMERYAPVAKDLASRDVVSRSMTIEIMEGRGAGPEKDHVYLQLHHLPPKQLAERLPGISETAMIFAGVDVTREPIPVLPTVHYNMGGVPTNYRGQVITIDKDGKDVIVPGLYAAGEAASSSVHGANRLGANSLLDLVVFGRACAKTIAELNKPGAPAPTLKENAGEASVANLDKLRHANGQITTADLRLKMQKTMQHHAAVFRDGPILQDGVNKMKEIYKQFKDIKVVDRSLIWNSDLVETLELQNLLANAQMTIVSAEARKESRGAHAREDFKVREDEYDFSKPLDGQQKKPMDQHWRKHTLSWVCNDNGDITLDYRNVIDTTLDNEVSTVPPAIRSY</sequence>
<reference key="1">
    <citation type="journal article" date="2000" name="Science">
        <title>The genome sequence of Drosophila melanogaster.</title>
        <authorList>
            <person name="Adams M.D."/>
            <person name="Celniker S.E."/>
            <person name="Holt R.A."/>
            <person name="Evans C.A."/>
            <person name="Gocayne J.D."/>
            <person name="Amanatides P.G."/>
            <person name="Scherer S.E."/>
            <person name="Li P.W."/>
            <person name="Hoskins R.A."/>
            <person name="Galle R.F."/>
            <person name="George R.A."/>
            <person name="Lewis S.E."/>
            <person name="Richards S."/>
            <person name="Ashburner M."/>
            <person name="Henderson S.N."/>
            <person name="Sutton G.G."/>
            <person name="Wortman J.R."/>
            <person name="Yandell M.D."/>
            <person name="Zhang Q."/>
            <person name="Chen L.X."/>
            <person name="Brandon R.C."/>
            <person name="Rogers Y.-H.C."/>
            <person name="Blazej R.G."/>
            <person name="Champe M."/>
            <person name="Pfeiffer B.D."/>
            <person name="Wan K.H."/>
            <person name="Doyle C."/>
            <person name="Baxter E.G."/>
            <person name="Helt G."/>
            <person name="Nelson C.R."/>
            <person name="Miklos G.L.G."/>
            <person name="Abril J.F."/>
            <person name="Agbayani A."/>
            <person name="An H.-J."/>
            <person name="Andrews-Pfannkoch C."/>
            <person name="Baldwin D."/>
            <person name="Ballew R.M."/>
            <person name="Basu A."/>
            <person name="Baxendale J."/>
            <person name="Bayraktaroglu L."/>
            <person name="Beasley E.M."/>
            <person name="Beeson K.Y."/>
            <person name="Benos P.V."/>
            <person name="Berman B.P."/>
            <person name="Bhandari D."/>
            <person name="Bolshakov S."/>
            <person name="Borkova D."/>
            <person name="Botchan M.R."/>
            <person name="Bouck J."/>
            <person name="Brokstein P."/>
            <person name="Brottier P."/>
            <person name="Burtis K.C."/>
            <person name="Busam D.A."/>
            <person name="Butler H."/>
            <person name="Cadieu E."/>
            <person name="Center A."/>
            <person name="Chandra I."/>
            <person name="Cherry J.M."/>
            <person name="Cawley S."/>
            <person name="Dahlke C."/>
            <person name="Davenport L.B."/>
            <person name="Davies P."/>
            <person name="de Pablos B."/>
            <person name="Delcher A."/>
            <person name="Deng Z."/>
            <person name="Mays A.D."/>
            <person name="Dew I."/>
            <person name="Dietz S.M."/>
            <person name="Dodson K."/>
            <person name="Doup L.E."/>
            <person name="Downes M."/>
            <person name="Dugan-Rocha S."/>
            <person name="Dunkov B.C."/>
            <person name="Dunn P."/>
            <person name="Durbin K.J."/>
            <person name="Evangelista C.C."/>
            <person name="Ferraz C."/>
            <person name="Ferriera S."/>
            <person name="Fleischmann W."/>
            <person name="Fosler C."/>
            <person name="Gabrielian A.E."/>
            <person name="Garg N.S."/>
            <person name="Gelbart W.M."/>
            <person name="Glasser K."/>
            <person name="Glodek A."/>
            <person name="Gong F."/>
            <person name="Gorrell J.H."/>
            <person name="Gu Z."/>
            <person name="Guan P."/>
            <person name="Harris M."/>
            <person name="Harris N.L."/>
            <person name="Harvey D.A."/>
            <person name="Heiman T.J."/>
            <person name="Hernandez J.R."/>
            <person name="Houck J."/>
            <person name="Hostin D."/>
            <person name="Houston K.A."/>
            <person name="Howland T.J."/>
            <person name="Wei M.-H."/>
            <person name="Ibegwam C."/>
            <person name="Jalali M."/>
            <person name="Kalush F."/>
            <person name="Karpen G.H."/>
            <person name="Ke Z."/>
            <person name="Kennison J.A."/>
            <person name="Ketchum K.A."/>
            <person name="Kimmel B.E."/>
            <person name="Kodira C.D."/>
            <person name="Kraft C.L."/>
            <person name="Kravitz S."/>
            <person name="Kulp D."/>
            <person name="Lai Z."/>
            <person name="Lasko P."/>
            <person name="Lei Y."/>
            <person name="Levitsky A.A."/>
            <person name="Li J.H."/>
            <person name="Li Z."/>
            <person name="Liang Y."/>
            <person name="Lin X."/>
            <person name="Liu X."/>
            <person name="Mattei B."/>
            <person name="McIntosh T.C."/>
            <person name="McLeod M.P."/>
            <person name="McPherson D."/>
            <person name="Merkulov G."/>
            <person name="Milshina N.V."/>
            <person name="Mobarry C."/>
            <person name="Morris J."/>
            <person name="Moshrefi A."/>
            <person name="Mount S.M."/>
            <person name="Moy M."/>
            <person name="Murphy B."/>
            <person name="Murphy L."/>
            <person name="Muzny D.M."/>
            <person name="Nelson D.L."/>
            <person name="Nelson D.R."/>
            <person name="Nelson K.A."/>
            <person name="Nixon K."/>
            <person name="Nusskern D.R."/>
            <person name="Pacleb J.M."/>
            <person name="Palazzolo M."/>
            <person name="Pittman G.S."/>
            <person name="Pan S."/>
            <person name="Pollard J."/>
            <person name="Puri V."/>
            <person name="Reese M.G."/>
            <person name="Reinert K."/>
            <person name="Remington K."/>
            <person name="Saunders R.D.C."/>
            <person name="Scheeler F."/>
            <person name="Shen H."/>
            <person name="Shue B.C."/>
            <person name="Siden-Kiamos I."/>
            <person name="Simpson M."/>
            <person name="Skupski M.P."/>
            <person name="Smith T.J."/>
            <person name="Spier E."/>
            <person name="Spradling A.C."/>
            <person name="Stapleton M."/>
            <person name="Strong R."/>
            <person name="Sun E."/>
            <person name="Svirskas R."/>
            <person name="Tector C."/>
            <person name="Turner R."/>
            <person name="Venter E."/>
            <person name="Wang A.H."/>
            <person name="Wang X."/>
            <person name="Wang Z.-Y."/>
            <person name="Wassarman D.A."/>
            <person name="Weinstock G.M."/>
            <person name="Weissenbach J."/>
            <person name="Williams S.M."/>
            <person name="Woodage T."/>
            <person name="Worley K.C."/>
            <person name="Wu D."/>
            <person name="Yang S."/>
            <person name="Yao Q.A."/>
            <person name="Ye J."/>
            <person name="Yeh R.-F."/>
            <person name="Zaveri J.S."/>
            <person name="Zhan M."/>
            <person name="Zhang G."/>
            <person name="Zhao Q."/>
            <person name="Zheng L."/>
            <person name="Zheng X.H."/>
            <person name="Zhong F.N."/>
            <person name="Zhong W."/>
            <person name="Zhou X."/>
            <person name="Zhu S.C."/>
            <person name="Zhu X."/>
            <person name="Smith H.O."/>
            <person name="Gibbs R.A."/>
            <person name="Myers E.W."/>
            <person name="Rubin G.M."/>
            <person name="Venter J.C."/>
        </authorList>
    </citation>
    <scope>NUCLEOTIDE SEQUENCE [LARGE SCALE GENOMIC DNA]</scope>
    <source>
        <strain>Berkeley</strain>
    </source>
</reference>
<reference key="2">
    <citation type="journal article" date="2002" name="Genome Biol.">
        <title>Annotation of the Drosophila melanogaster euchromatic genome: a systematic review.</title>
        <authorList>
            <person name="Misra S."/>
            <person name="Crosby M.A."/>
            <person name="Mungall C.J."/>
            <person name="Matthews B.B."/>
            <person name="Campbell K.S."/>
            <person name="Hradecky P."/>
            <person name="Huang Y."/>
            <person name="Kaminker J.S."/>
            <person name="Millburn G.H."/>
            <person name="Prochnik S.E."/>
            <person name="Smith C.D."/>
            <person name="Tupy J.L."/>
            <person name="Whitfield E.J."/>
            <person name="Bayraktaroglu L."/>
            <person name="Berman B.P."/>
            <person name="Bettencourt B.R."/>
            <person name="Celniker S.E."/>
            <person name="de Grey A.D.N.J."/>
            <person name="Drysdale R.A."/>
            <person name="Harris N.L."/>
            <person name="Richter J."/>
            <person name="Russo S."/>
            <person name="Schroeder A.J."/>
            <person name="Shu S.Q."/>
            <person name="Stapleton M."/>
            <person name="Yamada C."/>
            <person name="Ashburner M."/>
            <person name="Gelbart W.M."/>
            <person name="Rubin G.M."/>
            <person name="Lewis S.E."/>
        </authorList>
    </citation>
    <scope>GENOME REANNOTATION</scope>
    <source>
        <strain>Berkeley</strain>
    </source>
</reference>
<reference key="3">
    <citation type="journal article" date="2002" name="Genome Biol.">
        <title>A Drosophila full-length cDNA resource.</title>
        <authorList>
            <person name="Stapleton M."/>
            <person name="Carlson J.W."/>
            <person name="Brokstein P."/>
            <person name="Yu C."/>
            <person name="Champe M."/>
            <person name="George R.A."/>
            <person name="Guarin H."/>
            <person name="Kronmiller B."/>
            <person name="Pacleb J.M."/>
            <person name="Park S."/>
            <person name="Wan K.H."/>
            <person name="Rubin G.M."/>
            <person name="Celniker S.E."/>
        </authorList>
    </citation>
    <scope>NUCLEOTIDE SEQUENCE [LARGE SCALE MRNA]</scope>
    <source>
        <strain>Berkeley</strain>
        <tissue>Head</tissue>
    </source>
</reference>
<reference key="4">
    <citation type="submission" date="2009-08" db="EMBL/GenBank/DDBJ databases">
        <authorList>
            <person name="Carlson J.W."/>
            <person name="Booth B."/>
            <person name="Frise E."/>
            <person name="Park S."/>
            <person name="Wan K.H."/>
            <person name="Yu C."/>
            <person name="Celniker S.E."/>
        </authorList>
    </citation>
    <scope>NUCLEOTIDE SEQUENCE [LARGE SCALE MRNA]</scope>
    <source>
        <strain>Berkeley</strain>
        <tissue>Embryo</tissue>
    </source>
</reference>
<reference key="5">
    <citation type="journal article" date="1999" name="Mol. Gen. Genet.">
        <title>Identification of nuclear genes encoding mitochondrial proteins: isolation of a collection of D. melanogaster cDNAs homologous to sequences in the Human Gene Index database.</title>
        <authorList>
            <person name="Caggese C."/>
            <person name="Ragone G."/>
            <person name="Perrini B."/>
            <person name="Moschetti R."/>
            <person name="de Pinto V."/>
            <person name="Caizzi R."/>
            <person name="Barsanti P."/>
        </authorList>
    </citation>
    <scope>NUCLEOTIDE SEQUENCE [MRNA] OF 6-527</scope>
    <source>
        <tissue>Ovary</tissue>
    </source>
</reference>
<reference key="6">
    <citation type="journal article" date="2005" name="Genome Biol.">
        <title>Comparison of the oxidative phosphorylation (OXPHOS) nuclear genes in the genomes of Drosophila melanogaster, Drosophila pseudoobscura and Anopheles gambiae.</title>
        <authorList>
            <person name="Tripoli G."/>
            <person name="D'Elia D."/>
            <person name="Barsanti P."/>
            <person name="Caggese C."/>
        </authorList>
    </citation>
    <scope>IDENTIFICATION</scope>
</reference>
<reference key="7">
    <citation type="journal article" date="2008" name="Development">
        <title>Reactive oxygen species act remotely to cause synapse loss in a Drosophila model of developmental mitochondrial encephalopathy.</title>
        <authorList>
            <person name="Mast J.D."/>
            <person name="Tomalty K.M."/>
            <person name="Vogel H."/>
            <person name="Clandinin T.R."/>
        </authorList>
    </citation>
    <scope>FUNCTION</scope>
    <scope>DISRUPTION PHENOTYPE</scope>
</reference>
<dbReference type="EC" id="1.3.5.1" evidence="1"/>
<dbReference type="EMBL" id="AE013599">
    <property type="protein sequence ID" value="AAG22257.1"/>
    <property type="molecule type" value="Genomic_DNA"/>
</dbReference>
<dbReference type="EMBL" id="AE013599">
    <property type="protein sequence ID" value="AAN16127.1"/>
    <property type="molecule type" value="Genomic_DNA"/>
</dbReference>
<dbReference type="EMBL" id="AY051472">
    <property type="protein sequence ID" value="AAK92896.1"/>
    <property type="molecule type" value="mRNA"/>
</dbReference>
<dbReference type="EMBL" id="BT099627">
    <property type="protein sequence ID" value="ACU51771.1"/>
    <property type="molecule type" value="mRNA"/>
</dbReference>
<dbReference type="EMBL" id="Y09064">
    <property type="protein sequence ID" value="CAA70285.1"/>
    <property type="status" value="ALT_INIT"/>
    <property type="molecule type" value="mRNA"/>
</dbReference>
<dbReference type="RefSeq" id="NP_477210.1">
    <property type="nucleotide sequence ID" value="NM_057862.5"/>
</dbReference>
<dbReference type="RefSeq" id="NP_725881.1">
    <property type="nucleotide sequence ID" value="NM_166343.3"/>
</dbReference>
<dbReference type="RefSeq" id="NP_725882.1">
    <property type="nucleotide sequence ID" value="NM_166344.3"/>
</dbReference>
<dbReference type="SMR" id="Q94523"/>
<dbReference type="BioGRID" id="62892">
    <property type="interactions" value="18"/>
</dbReference>
<dbReference type="ComplexPortal" id="CPX-8622">
    <property type="entry name" value="Mitochondrial respiratory chain complex II"/>
</dbReference>
<dbReference type="DIP" id="DIP-19386N"/>
<dbReference type="FunCoup" id="Q94523">
    <property type="interactions" value="1180"/>
</dbReference>
<dbReference type="IntAct" id="Q94523">
    <property type="interactions" value="6"/>
</dbReference>
<dbReference type="STRING" id="7227.FBpp0085737"/>
<dbReference type="PaxDb" id="7227-FBpp0085736"/>
<dbReference type="EnsemblMetazoa" id="FBtr0086552">
    <property type="protein sequence ID" value="FBpp0085736"/>
    <property type="gene ID" value="FBgn0261439"/>
</dbReference>
<dbReference type="EnsemblMetazoa" id="FBtr0086553">
    <property type="protein sequence ID" value="FBpp0085737"/>
    <property type="gene ID" value="FBgn0261439"/>
</dbReference>
<dbReference type="EnsemblMetazoa" id="FBtr0086554">
    <property type="protein sequence ID" value="FBpp0085738"/>
    <property type="gene ID" value="FBgn0261439"/>
</dbReference>
<dbReference type="GeneID" id="37228"/>
<dbReference type="KEGG" id="dme:Dmel_CG17246"/>
<dbReference type="AGR" id="FB:FBgn0261439"/>
<dbReference type="CTD" id="6389"/>
<dbReference type="FlyBase" id="FBgn0261439">
    <property type="gene designation" value="SdhA"/>
</dbReference>
<dbReference type="VEuPathDB" id="VectorBase:FBgn0261439"/>
<dbReference type="eggNOG" id="KOG2403">
    <property type="taxonomic scope" value="Eukaryota"/>
</dbReference>
<dbReference type="GeneTree" id="ENSGT00910000144277"/>
<dbReference type="HOGENOM" id="CLU_014312_6_1_1"/>
<dbReference type="InParanoid" id="Q94523"/>
<dbReference type="OMA" id="PTGIWRM"/>
<dbReference type="OrthoDB" id="71672at2759"/>
<dbReference type="PhylomeDB" id="Q94523"/>
<dbReference type="Reactome" id="R-DME-71403">
    <property type="pathway name" value="Citric acid cycle (TCA cycle)"/>
</dbReference>
<dbReference type="Reactome" id="R-DME-9854311">
    <property type="pathway name" value="Maturation of TCA enzymes and regulation of TCA cycle"/>
</dbReference>
<dbReference type="UniPathway" id="UPA00223">
    <property type="reaction ID" value="UER01006"/>
</dbReference>
<dbReference type="BioGRID-ORCS" id="37228">
    <property type="hits" value="0 hits in 3 CRISPR screens"/>
</dbReference>
<dbReference type="ChiTaRS" id="SdhA">
    <property type="organism name" value="fly"/>
</dbReference>
<dbReference type="GenomeRNAi" id="37228"/>
<dbReference type="PRO" id="PR:Q94523"/>
<dbReference type="Proteomes" id="UP000000803">
    <property type="component" value="Chromosome 2R"/>
</dbReference>
<dbReference type="Bgee" id="FBgn0261439">
    <property type="expression patterns" value="Expressed in adult hindgut (Drosophila) and 270 other cell types or tissues"/>
</dbReference>
<dbReference type="GO" id="GO:0005743">
    <property type="term" value="C:mitochondrial inner membrane"/>
    <property type="evidence" value="ECO:0000250"/>
    <property type="project" value="FlyBase"/>
</dbReference>
<dbReference type="GO" id="GO:0005739">
    <property type="term" value="C:mitochondrion"/>
    <property type="evidence" value="ECO:0007005"/>
    <property type="project" value="FlyBase"/>
</dbReference>
<dbReference type="GO" id="GO:0045273">
    <property type="term" value="C:respiratory chain complex II (succinate dehydrogenase)"/>
    <property type="evidence" value="ECO:0000314"/>
    <property type="project" value="FlyBase"/>
</dbReference>
<dbReference type="GO" id="GO:0009055">
    <property type="term" value="F:electron transfer activity"/>
    <property type="evidence" value="ECO:0000318"/>
    <property type="project" value="GO_Central"/>
</dbReference>
<dbReference type="GO" id="GO:0050660">
    <property type="term" value="F:flavin adenine dinucleotide binding"/>
    <property type="evidence" value="ECO:0000318"/>
    <property type="project" value="GO_Central"/>
</dbReference>
<dbReference type="GO" id="GO:0008177">
    <property type="term" value="F:succinate dehydrogenase (quinone) activity"/>
    <property type="evidence" value="ECO:0000250"/>
    <property type="project" value="FlyBase"/>
</dbReference>
<dbReference type="GO" id="GO:0022900">
    <property type="term" value="P:electron transport chain"/>
    <property type="evidence" value="ECO:0000315"/>
    <property type="project" value="UniProtKB"/>
</dbReference>
<dbReference type="GO" id="GO:0006121">
    <property type="term" value="P:mitochondrial electron transport, succinate to ubiquinone"/>
    <property type="evidence" value="ECO:0000318"/>
    <property type="project" value="GO_Central"/>
</dbReference>
<dbReference type="GO" id="GO:0022904">
    <property type="term" value="P:respiratory electron transport chain"/>
    <property type="evidence" value="ECO:0000250"/>
    <property type="project" value="FlyBase"/>
</dbReference>
<dbReference type="GO" id="GO:0006105">
    <property type="term" value="P:succinate metabolic process"/>
    <property type="evidence" value="ECO:0000250"/>
    <property type="project" value="FlyBase"/>
</dbReference>
<dbReference type="GO" id="GO:0006099">
    <property type="term" value="P:tricarboxylic acid cycle"/>
    <property type="evidence" value="ECO:0007669"/>
    <property type="project" value="UniProtKB-UniPathway"/>
</dbReference>
<dbReference type="FunFam" id="3.90.700.10:FF:000001">
    <property type="entry name" value="Mitochondrial succinate dehydrogenase flavoprotein subunit"/>
    <property type="match status" value="1"/>
</dbReference>
<dbReference type="FunFam" id="4.10.80.40:FF:000004">
    <property type="entry name" value="Succinate dehydrogenase [ubiquinone] flavoprotein subunit, mitochondrial"/>
    <property type="match status" value="1"/>
</dbReference>
<dbReference type="FunFam" id="3.50.50.60:FF:000482">
    <property type="entry name" value="Succinate dehydrogenase complex, subunit A, flavoprotein (Fp)"/>
    <property type="match status" value="1"/>
</dbReference>
<dbReference type="FunFam" id="3.50.50.60:FF:001062">
    <property type="entry name" value="Succinate dehydrogenase complex, subunit A, flavoprotein (Fp)"/>
    <property type="match status" value="1"/>
</dbReference>
<dbReference type="FunFam" id="1.20.58.100:FF:000001">
    <property type="entry name" value="Succinate dehydrogenase flavoprotein subunit (SdhA)"/>
    <property type="match status" value="1"/>
</dbReference>
<dbReference type="Gene3D" id="3.50.50.60">
    <property type="entry name" value="FAD/NAD(P)-binding domain"/>
    <property type="match status" value="1"/>
</dbReference>
<dbReference type="Gene3D" id="1.20.58.100">
    <property type="entry name" value="Fumarate reductase/succinate dehydrogenase flavoprotein-like, C-terminal domain"/>
    <property type="match status" value="1"/>
</dbReference>
<dbReference type="Gene3D" id="4.10.80.40">
    <property type="entry name" value="succinate dehydrogenase protein domain"/>
    <property type="match status" value="1"/>
</dbReference>
<dbReference type="Gene3D" id="3.90.700.10">
    <property type="entry name" value="Succinate dehydrogenase/fumarate reductase flavoprotein, catalytic domain"/>
    <property type="match status" value="1"/>
</dbReference>
<dbReference type="InterPro" id="IPR003953">
    <property type="entry name" value="FAD-dep_OxRdtase_2_FAD-bd"/>
</dbReference>
<dbReference type="InterPro" id="IPR036188">
    <property type="entry name" value="FAD/NAD-bd_sf"/>
</dbReference>
<dbReference type="InterPro" id="IPR003952">
    <property type="entry name" value="FRD_SDH_FAD_BS"/>
</dbReference>
<dbReference type="InterPro" id="IPR037099">
    <property type="entry name" value="Fum_R/Succ_DH_flav-like_C_sf"/>
</dbReference>
<dbReference type="InterPro" id="IPR015939">
    <property type="entry name" value="Fum_Rdtase/Succ_DH_flav-like_C"/>
</dbReference>
<dbReference type="InterPro" id="IPR030664">
    <property type="entry name" value="SdhA/FrdA/AprA"/>
</dbReference>
<dbReference type="InterPro" id="IPR027477">
    <property type="entry name" value="Succ_DH/fumarate_Rdtase_cat_sf"/>
</dbReference>
<dbReference type="InterPro" id="IPR011281">
    <property type="entry name" value="Succ_DH_flav_su_fwd"/>
</dbReference>
<dbReference type="InterPro" id="IPR014006">
    <property type="entry name" value="Succ_Dhase_FrdA_Gneg"/>
</dbReference>
<dbReference type="NCBIfam" id="TIGR01816">
    <property type="entry name" value="sdhA_forward"/>
    <property type="match status" value="1"/>
</dbReference>
<dbReference type="NCBIfam" id="TIGR01812">
    <property type="entry name" value="sdhA_frdA_Gneg"/>
    <property type="match status" value="1"/>
</dbReference>
<dbReference type="PANTHER" id="PTHR11632">
    <property type="entry name" value="SUCCINATE DEHYDROGENASE 2 FLAVOPROTEIN SUBUNIT"/>
    <property type="match status" value="1"/>
</dbReference>
<dbReference type="PANTHER" id="PTHR11632:SF51">
    <property type="entry name" value="SUCCINATE DEHYDROGENASE [UBIQUINONE] FLAVOPROTEIN SUBUNIT, MITOCHONDRIAL"/>
    <property type="match status" value="1"/>
</dbReference>
<dbReference type="Pfam" id="PF00890">
    <property type="entry name" value="FAD_binding_2"/>
    <property type="match status" value="1"/>
</dbReference>
<dbReference type="Pfam" id="PF02910">
    <property type="entry name" value="Succ_DH_flav_C"/>
    <property type="match status" value="1"/>
</dbReference>
<dbReference type="PIRSF" id="PIRSF000171">
    <property type="entry name" value="SDHA_APRA_LASPO"/>
    <property type="match status" value="1"/>
</dbReference>
<dbReference type="SUPFAM" id="SSF51905">
    <property type="entry name" value="FAD/NAD(P)-binding domain"/>
    <property type="match status" value="1"/>
</dbReference>
<dbReference type="SUPFAM" id="SSF46977">
    <property type="entry name" value="Succinate dehydrogenase/fumarate reductase flavoprotein C-terminal domain"/>
    <property type="match status" value="1"/>
</dbReference>
<dbReference type="SUPFAM" id="SSF56425">
    <property type="entry name" value="Succinate dehydrogenase/fumarate reductase flavoprotein, catalytic domain"/>
    <property type="match status" value="1"/>
</dbReference>
<dbReference type="PROSITE" id="PS00504">
    <property type="entry name" value="FRD_SDH_FAD_BINDING"/>
    <property type="match status" value="1"/>
</dbReference>
<evidence type="ECO:0000250" key="1">
    <source>
        <dbReference type="UniProtKB" id="P31040"/>
    </source>
</evidence>
<evidence type="ECO:0000250" key="2">
    <source>
        <dbReference type="UniProtKB" id="Q0QF01"/>
    </source>
</evidence>
<evidence type="ECO:0000250" key="3">
    <source>
        <dbReference type="UniProtKB" id="Q9YHT1"/>
    </source>
</evidence>
<evidence type="ECO:0000255" key="4"/>
<evidence type="ECO:0000269" key="5">
    <source>
    </source>
</evidence>
<evidence type="ECO:0000305" key="6"/>
<name>SDHA_DROME</name>
<accession>Q94523</accession>
<accession>A4UZP5</accession>
<accession>C7LA77</accession>
<accession>Q0E918</accession>
<accession>Q9I7G3</accession>
<comment type="function">
    <text evidence="5">Flavoprotein (FP) subunit of succinate dehydrogenase (SDH) that is involved in complex II of the mitochondrial electron transport chain and is responsible for transferring electrons from succinate to ubiquinone (coenzyme Q). Maintaining electron transport chain function is required to prevent neurodegenerative changes seen in both early- and late-onset disorders.</text>
</comment>
<comment type="catalytic activity">
    <reaction evidence="1">
        <text>a quinone + succinate = fumarate + a quinol</text>
        <dbReference type="Rhea" id="RHEA:40523"/>
        <dbReference type="ChEBI" id="CHEBI:24646"/>
        <dbReference type="ChEBI" id="CHEBI:29806"/>
        <dbReference type="ChEBI" id="CHEBI:30031"/>
        <dbReference type="ChEBI" id="CHEBI:132124"/>
        <dbReference type="EC" id="1.3.5.1"/>
    </reaction>
</comment>
<comment type="cofactor">
    <cofactor evidence="2">
        <name>FAD</name>
        <dbReference type="ChEBI" id="CHEBI:57692"/>
    </cofactor>
</comment>
<comment type="pathway">
    <text evidence="1">Carbohydrate metabolism; tricarboxylic acid cycle; fumarate from succinate (eukaryal route): step 1/1.</text>
</comment>
<comment type="subunit">
    <text evidence="2">Component of complex II composed of four subunits: a flavoprotein (FP), an iron-sulfur protein (IP), and a cytochrome b composed of a large and a small subunit.</text>
</comment>
<comment type="subcellular location">
    <subcellularLocation>
        <location evidence="2">Mitochondrion inner membrane</location>
        <topology evidence="2">Peripheral membrane protein</topology>
        <orientation evidence="2">Matrix side</orientation>
    </subcellularLocation>
</comment>
<comment type="disruption phenotype">
    <text evidence="5">Disruption of mitochondrial function has no effect on the initial stages of photoreceptor development (R cells develop normally, adopt the correct cell fates, innervate the appropriate synaptic partners, and assemble synapses normally). However, beginning around the time of eclosion, R cells degenerate, progressively losing expression of synaptic markers and undergoing extensive morphological changes. Synapse loss is caused by reactive oxygen species (ROS) production, not energy depletion, as photoreceptor ATP levels are normal.</text>
</comment>
<comment type="similarity">
    <text evidence="6">Belongs to the FAD-dependent oxidoreductase 2 family. FRD/SDH subfamily.</text>
</comment>
<comment type="sequence caution" evidence="6">
    <conflict type="erroneous initiation">
        <sequence resource="EMBL-CDS" id="CAA70285"/>
    </conflict>
    <text>Truncated N-terminus.</text>
</comment>
<organism>
    <name type="scientific">Drosophila melanogaster</name>
    <name type="common">Fruit fly</name>
    <dbReference type="NCBI Taxonomy" id="7227"/>
    <lineage>
        <taxon>Eukaryota</taxon>
        <taxon>Metazoa</taxon>
        <taxon>Ecdysozoa</taxon>
        <taxon>Arthropoda</taxon>
        <taxon>Hexapoda</taxon>
        <taxon>Insecta</taxon>
        <taxon>Pterygota</taxon>
        <taxon>Neoptera</taxon>
        <taxon>Endopterygota</taxon>
        <taxon>Diptera</taxon>
        <taxon>Brachycera</taxon>
        <taxon>Muscomorpha</taxon>
        <taxon>Ephydroidea</taxon>
        <taxon>Drosophilidae</taxon>
        <taxon>Drosophila</taxon>
        <taxon>Sophophora</taxon>
    </lineage>
</organism>
<proteinExistence type="evidence at transcript level"/>
<protein>
    <recommendedName>
        <fullName>Succinate dehydrogenase [ubiquinone] flavoprotein subunit, mitochondrial</fullName>
        <ecNumber evidence="1">1.3.5.1</ecNumber>
    </recommendedName>
    <alternativeName>
        <fullName>Flavoprotein subunit of complex II</fullName>
        <shortName>FP</shortName>
    </alternativeName>
    <alternativeName>
        <fullName>Succinyl coenzyme A synthetase flavoprotein subunit</fullName>
    </alternativeName>
</protein>
<keyword id="KW-0249">Electron transport</keyword>
<keyword id="KW-0274">FAD</keyword>
<keyword id="KW-0285">Flavoprotein</keyword>
<keyword id="KW-0472">Membrane</keyword>
<keyword id="KW-0496">Mitochondrion</keyword>
<keyword id="KW-0999">Mitochondrion inner membrane</keyword>
<keyword id="KW-0560">Oxidoreductase</keyword>
<keyword id="KW-1185">Reference proteome</keyword>
<keyword id="KW-0809">Transit peptide</keyword>
<keyword id="KW-0813">Transport</keyword>
<keyword id="KW-0816">Tricarboxylic acid cycle</keyword>
<gene>
    <name type="primary">SdhA</name>
    <name type="synonym">Scs-fp</name>
    <name type="ORF">CG17246</name>
</gene>